<accession>P27589</accession>
<keyword id="KW-0002">3D-structure</keyword>
<keyword id="KW-0249">Electron transport</keyword>
<keyword id="KW-0472">Membrane</keyword>
<keyword id="KW-0602">Photosynthesis</keyword>
<keyword id="KW-1185">Reference proteome</keyword>
<keyword id="KW-0793">Thylakoid</keyword>
<keyword id="KW-0812">Transmembrane</keyword>
<keyword id="KW-1133">Transmembrane helix</keyword>
<keyword id="KW-0813">Transport</keyword>
<comment type="function">
    <text evidence="1">Component of the cytochrome b6-f complex, which mediates electron transfer between photosystem II (PSII) and photosystem I (PSI), cyclic electron flow around PSI, and state transitions.</text>
</comment>
<comment type="subunit">
    <text evidence="1">The 4 large subunits of the cytochrome b6-f complex are cytochrome b6, subunit IV (17 kDa polypeptide, PetD), cytochrome f and the Rieske protein, while the 4 small subunits are PetG, PetL, PetM and PetN. The complex functions as a dimer.</text>
</comment>
<comment type="subcellular location">
    <subcellularLocation>
        <location evidence="1">Cellular thylakoid membrane</location>
        <topology evidence="1">Multi-pass membrane protein</topology>
    </subcellularLocation>
</comment>
<comment type="similarity">
    <text evidence="1">Belongs to the cytochrome b family. PetD subfamily.</text>
</comment>
<feature type="chain" id="PRO_0000061913" description="Cytochrome b6-f complex subunit 4">
    <location>
        <begin position="1"/>
        <end position="160"/>
    </location>
</feature>
<feature type="transmembrane region" description="Helical" evidence="1">
    <location>
        <begin position="36"/>
        <end position="56"/>
    </location>
</feature>
<feature type="transmembrane region" description="Helical" evidence="1">
    <location>
        <begin position="95"/>
        <end position="115"/>
    </location>
</feature>
<feature type="transmembrane region" description="Helical" evidence="1">
    <location>
        <begin position="127"/>
        <end position="147"/>
    </location>
</feature>
<feature type="helix" evidence="2">
    <location>
        <begin position="12"/>
        <end position="19"/>
    </location>
</feature>
<feature type="helix" evidence="2">
    <location>
        <begin position="24"/>
        <end position="26"/>
    </location>
</feature>
<feature type="strand" evidence="2">
    <location>
        <begin position="27"/>
        <end position="30"/>
    </location>
</feature>
<feature type="helix" evidence="2">
    <location>
        <begin position="31"/>
        <end position="38"/>
    </location>
</feature>
<feature type="helix" evidence="2">
    <location>
        <begin position="39"/>
        <end position="57"/>
    </location>
</feature>
<feature type="helix" evidence="2">
    <location>
        <begin position="79"/>
        <end position="81"/>
    </location>
</feature>
<feature type="helix" evidence="2">
    <location>
        <begin position="82"/>
        <end position="90"/>
    </location>
</feature>
<feature type="strand" evidence="2">
    <location>
        <begin position="91"/>
        <end position="93"/>
    </location>
</feature>
<feature type="helix" evidence="2">
    <location>
        <begin position="94"/>
        <end position="115"/>
    </location>
</feature>
<feature type="helix" evidence="2">
    <location>
        <begin position="123"/>
        <end position="125"/>
    </location>
</feature>
<feature type="helix" evidence="2">
    <location>
        <begin position="127"/>
        <end position="148"/>
    </location>
</feature>
<feature type="turn" evidence="2">
    <location>
        <begin position="151"/>
        <end position="158"/>
    </location>
</feature>
<gene>
    <name evidence="1" type="primary">petD</name>
    <name type="ordered locus">slr0343</name>
</gene>
<evidence type="ECO:0000255" key="1">
    <source>
        <dbReference type="HAMAP-Rule" id="MF_01344"/>
    </source>
</evidence>
<evidence type="ECO:0007829" key="2">
    <source>
        <dbReference type="PDB" id="7R0W"/>
    </source>
</evidence>
<proteinExistence type="evidence at protein level"/>
<organism>
    <name type="scientific">Synechocystis sp. (strain ATCC 27184 / PCC 6803 / Kazusa)</name>
    <dbReference type="NCBI Taxonomy" id="1111708"/>
    <lineage>
        <taxon>Bacteria</taxon>
        <taxon>Bacillati</taxon>
        <taxon>Cyanobacteriota</taxon>
        <taxon>Cyanophyceae</taxon>
        <taxon>Synechococcales</taxon>
        <taxon>Merismopediaceae</taxon>
        <taxon>Synechocystis</taxon>
    </lineage>
</organism>
<name>PETD_SYNY3</name>
<reference key="1">
    <citation type="journal article" date="1992" name="Arch. Microbiol.">
        <title>Construction of insertion mutants of Synechocystis sp. PCC 6803: evidence for an essential function of subunit IV of the cytochrome b6/f complex.</title>
        <authorList>
            <person name="Osiewacz H.D."/>
        </authorList>
    </citation>
    <scope>NUCLEOTIDE SEQUENCE [GENOMIC DNA]</scope>
</reference>
<reference key="2">
    <citation type="journal article" date="1995" name="DNA Res.">
        <title>Sequence analysis of the genome of the unicellular cyanobacterium Synechocystis sp. strain PCC6803. I. Sequence features in the 1 Mb region from map positions 64% to 92% of the genome.</title>
        <authorList>
            <person name="Kaneko T."/>
            <person name="Tanaka A."/>
            <person name="Sato S."/>
            <person name="Kotani H."/>
            <person name="Sazuka T."/>
            <person name="Miyajima N."/>
            <person name="Sugiura M."/>
            <person name="Tabata S."/>
        </authorList>
    </citation>
    <scope>NUCLEOTIDE SEQUENCE [LARGE SCALE GENOMIC DNA]</scope>
    <source>
        <strain>ATCC 27184 / PCC 6803 / N-1</strain>
    </source>
</reference>
<reference key="3">
    <citation type="journal article" date="1996" name="DNA Res.">
        <title>Sequence analysis of the genome of the unicellular cyanobacterium Synechocystis sp. strain PCC6803. II. Sequence determination of the entire genome and assignment of potential protein-coding regions.</title>
        <authorList>
            <person name="Kaneko T."/>
            <person name="Sato S."/>
            <person name="Kotani H."/>
            <person name="Tanaka A."/>
            <person name="Asamizu E."/>
            <person name="Nakamura Y."/>
            <person name="Miyajima N."/>
            <person name="Hirosawa M."/>
            <person name="Sugiura M."/>
            <person name="Sasamoto S."/>
            <person name="Kimura T."/>
            <person name="Hosouchi T."/>
            <person name="Matsuno A."/>
            <person name="Muraki A."/>
            <person name="Nakazaki N."/>
            <person name="Naruo K."/>
            <person name="Okumura S."/>
            <person name="Shimpo S."/>
            <person name="Takeuchi C."/>
            <person name="Wada T."/>
            <person name="Watanabe A."/>
            <person name="Yamada M."/>
            <person name="Yasuda M."/>
            <person name="Tabata S."/>
        </authorList>
    </citation>
    <scope>NUCLEOTIDE SEQUENCE [LARGE SCALE GENOMIC DNA]</scope>
    <source>
        <strain>ATCC 27184 / PCC 6803 / Kazusa</strain>
    </source>
</reference>
<protein>
    <recommendedName>
        <fullName evidence="1">Cytochrome b6-f complex subunit 4</fullName>
    </recommendedName>
    <alternativeName>
        <fullName evidence="1">17 kDa polypeptide</fullName>
    </alternativeName>
</protein>
<dbReference type="EMBL" id="X58522">
    <property type="protein sequence ID" value="CAA41412.1"/>
    <property type="molecule type" value="Genomic_DNA"/>
</dbReference>
<dbReference type="EMBL" id="BA000022">
    <property type="protein sequence ID" value="BAA10150.1"/>
    <property type="molecule type" value="Genomic_DNA"/>
</dbReference>
<dbReference type="PIR" id="A61088">
    <property type="entry name" value="A61088"/>
</dbReference>
<dbReference type="PDB" id="7R0W">
    <property type="method" value="EM"/>
    <property type="resolution" value="2.80 A"/>
    <property type="chains" value="B/J=1-160"/>
</dbReference>
<dbReference type="PDB" id="7ZXY">
    <property type="method" value="EM"/>
    <property type="resolution" value="3.15 A"/>
    <property type="chains" value="B/J=1-160"/>
</dbReference>
<dbReference type="PDBsum" id="7R0W"/>
<dbReference type="PDBsum" id="7ZXY"/>
<dbReference type="EMDB" id="EMD-14224"/>
<dbReference type="EMDB" id="EMD-15017"/>
<dbReference type="SMR" id="P27589"/>
<dbReference type="IntAct" id="P27589">
    <property type="interactions" value="6"/>
</dbReference>
<dbReference type="STRING" id="1148.gene:10499643"/>
<dbReference type="TCDB" id="3.E.2.2.2">
    <property type="family name" value="the photosynthetic reaction center (prc) family"/>
</dbReference>
<dbReference type="PaxDb" id="1148-1001523"/>
<dbReference type="EnsemblBacteria" id="BAA10150">
    <property type="protein sequence ID" value="BAA10150"/>
    <property type="gene ID" value="BAA10150"/>
</dbReference>
<dbReference type="KEGG" id="syn:slr0343"/>
<dbReference type="eggNOG" id="COG1290">
    <property type="taxonomic scope" value="Bacteria"/>
</dbReference>
<dbReference type="InParanoid" id="P27589"/>
<dbReference type="PhylomeDB" id="P27589"/>
<dbReference type="Proteomes" id="UP000001425">
    <property type="component" value="Chromosome"/>
</dbReference>
<dbReference type="GO" id="GO:0009512">
    <property type="term" value="C:cytochrome b6f complex"/>
    <property type="evidence" value="ECO:0000314"/>
    <property type="project" value="UniProtKB"/>
</dbReference>
<dbReference type="GO" id="GO:0031676">
    <property type="term" value="C:plasma membrane-derived thylakoid membrane"/>
    <property type="evidence" value="ECO:0007669"/>
    <property type="project" value="UniProtKB-SubCell"/>
</dbReference>
<dbReference type="GO" id="GO:0045158">
    <property type="term" value="F:electron transporter, transferring electrons within cytochrome b6/f complex of photosystem II activity"/>
    <property type="evidence" value="ECO:0007669"/>
    <property type="project" value="UniProtKB-UniRule"/>
</dbReference>
<dbReference type="GO" id="GO:0045156">
    <property type="term" value="F:electron transporter, transferring electrons within the cyclic electron transport pathway of photosynthesis activity"/>
    <property type="evidence" value="ECO:0007669"/>
    <property type="project" value="InterPro"/>
</dbReference>
<dbReference type="GO" id="GO:0016491">
    <property type="term" value="F:oxidoreductase activity"/>
    <property type="evidence" value="ECO:0007669"/>
    <property type="project" value="InterPro"/>
</dbReference>
<dbReference type="GO" id="GO:0009767">
    <property type="term" value="P:photosynthetic electron transport chain"/>
    <property type="evidence" value="ECO:0007669"/>
    <property type="project" value="InterPro"/>
</dbReference>
<dbReference type="CDD" id="cd00290">
    <property type="entry name" value="cytochrome_b_C"/>
    <property type="match status" value="1"/>
</dbReference>
<dbReference type="FunFam" id="1.10.287.980:FF:000001">
    <property type="entry name" value="Cytochrome b6-f complex subunit 4"/>
    <property type="match status" value="1"/>
</dbReference>
<dbReference type="FunFam" id="1.20.5.510:FF:000002">
    <property type="entry name" value="Cytochrome b6-f complex subunit 4"/>
    <property type="match status" value="1"/>
</dbReference>
<dbReference type="Gene3D" id="1.10.287.980">
    <property type="entry name" value="plastocyanin oxidoreductase"/>
    <property type="match status" value="1"/>
</dbReference>
<dbReference type="Gene3D" id="1.20.5.510">
    <property type="entry name" value="Single helix bin"/>
    <property type="match status" value="1"/>
</dbReference>
<dbReference type="HAMAP" id="MF_01344">
    <property type="entry name" value="Cytb6_f_subIV"/>
    <property type="match status" value="1"/>
</dbReference>
<dbReference type="InterPro" id="IPR005798">
    <property type="entry name" value="Cyt_b/b6_C"/>
</dbReference>
<dbReference type="InterPro" id="IPR036150">
    <property type="entry name" value="Cyt_b/b6_C_sf"/>
</dbReference>
<dbReference type="InterPro" id="IPR005870">
    <property type="entry name" value="Cyt_b6/f_cplx_suIV"/>
</dbReference>
<dbReference type="InterPro" id="IPR048260">
    <property type="entry name" value="Cytochrome_b_C_euk/bac"/>
</dbReference>
<dbReference type="NCBIfam" id="TIGR01156">
    <property type="entry name" value="cytb6_f_IV"/>
    <property type="match status" value="1"/>
</dbReference>
<dbReference type="PANTHER" id="PTHR19271">
    <property type="entry name" value="CYTOCHROME B"/>
    <property type="match status" value="1"/>
</dbReference>
<dbReference type="PANTHER" id="PTHR19271:SF40">
    <property type="entry name" value="CYTOCHROME B"/>
    <property type="match status" value="1"/>
</dbReference>
<dbReference type="Pfam" id="PF00032">
    <property type="entry name" value="Cytochrom_B_C"/>
    <property type="match status" value="1"/>
</dbReference>
<dbReference type="PIRSF" id="PIRSF000033">
    <property type="entry name" value="B6f_17K"/>
    <property type="match status" value="1"/>
</dbReference>
<dbReference type="SUPFAM" id="SSF81648">
    <property type="entry name" value="a domain/subunit of cytochrome bc1 complex (Ubiquinol-cytochrome c reductase)"/>
    <property type="match status" value="1"/>
</dbReference>
<dbReference type="PROSITE" id="PS51003">
    <property type="entry name" value="CYTB_CTER"/>
    <property type="match status" value="1"/>
</dbReference>
<sequence>MSIIKKPDLSDPDLRAKLAKGMGHNYYGEPAWPNDILYMFPICILGALGLIAGLAILDPAMIGEPADPFATPLEILPEWYLYPTFQILRILPNKLLGIAGMAAIPLGLMLVPFIESVNKFQNPFRRPIAMTVFLFGTAAALWLGAGATFPIDKSLTLGLF</sequence>